<evidence type="ECO:0000255" key="1">
    <source>
        <dbReference type="PROSITE-ProRule" id="PRU00182"/>
    </source>
</evidence>
<evidence type="ECO:0000269" key="2">
    <source>
    </source>
</evidence>
<evidence type="ECO:0000269" key="3">
    <source>
    </source>
</evidence>
<evidence type="ECO:0000303" key="4">
    <source>
    </source>
</evidence>
<evidence type="ECO:0000305" key="5"/>
<evidence type="ECO:0000305" key="6">
    <source>
    </source>
</evidence>
<evidence type="ECO:0007744" key="7">
    <source>
        <dbReference type="PDB" id="8S1P"/>
    </source>
</evidence>
<evidence type="ECO:0007744" key="8">
    <source>
        <dbReference type="PDB" id="8S1U"/>
    </source>
</evidence>
<evidence type="ECO:0007829" key="9">
    <source>
        <dbReference type="PDB" id="8S1P"/>
    </source>
</evidence>
<keyword id="KW-0002">3D-structure</keyword>
<keyword id="KW-0963">Cytoplasm</keyword>
<keyword id="KW-0648">Protein biosynthesis</keyword>
<keyword id="KW-1185">Reference proteome</keyword>
<keyword id="KW-0690">Ribosome biogenesis</keyword>
<keyword id="KW-0694">RNA-binding</keyword>
<keyword id="KW-0699">rRNA-binding</keyword>
<keyword id="KW-0820">tRNA-binding</keyword>
<name>RQCP2_BACSU</name>
<reference key="1">
    <citation type="journal article" date="1997" name="J. Bacteriol.">
        <title>The divIVA minicell locus of Bacillus subtilis.</title>
        <authorList>
            <person name="Cha J.-H."/>
            <person name="Stewart G.C."/>
        </authorList>
    </citation>
    <scope>NUCLEOTIDE SEQUENCE [GENOMIC DNA]</scope>
    <scope>DISRUPTION PHENOTYPE</scope>
    <source>
        <strain>168</strain>
    </source>
</reference>
<reference key="2">
    <citation type="journal article" date="1997" name="Nature">
        <title>The complete genome sequence of the Gram-positive bacterium Bacillus subtilis.</title>
        <authorList>
            <person name="Kunst F."/>
            <person name="Ogasawara N."/>
            <person name="Moszer I."/>
            <person name="Albertini A.M."/>
            <person name="Alloni G."/>
            <person name="Azevedo V."/>
            <person name="Bertero M.G."/>
            <person name="Bessieres P."/>
            <person name="Bolotin A."/>
            <person name="Borchert S."/>
            <person name="Borriss R."/>
            <person name="Boursier L."/>
            <person name="Brans A."/>
            <person name="Braun M."/>
            <person name="Brignell S.C."/>
            <person name="Bron S."/>
            <person name="Brouillet S."/>
            <person name="Bruschi C.V."/>
            <person name="Caldwell B."/>
            <person name="Capuano V."/>
            <person name="Carter N.M."/>
            <person name="Choi S.-K."/>
            <person name="Codani J.-J."/>
            <person name="Connerton I.F."/>
            <person name="Cummings N.J."/>
            <person name="Daniel R.A."/>
            <person name="Denizot F."/>
            <person name="Devine K.M."/>
            <person name="Duesterhoeft A."/>
            <person name="Ehrlich S.D."/>
            <person name="Emmerson P.T."/>
            <person name="Entian K.-D."/>
            <person name="Errington J."/>
            <person name="Fabret C."/>
            <person name="Ferrari E."/>
            <person name="Foulger D."/>
            <person name="Fritz C."/>
            <person name="Fujita M."/>
            <person name="Fujita Y."/>
            <person name="Fuma S."/>
            <person name="Galizzi A."/>
            <person name="Galleron N."/>
            <person name="Ghim S.-Y."/>
            <person name="Glaser P."/>
            <person name="Goffeau A."/>
            <person name="Golightly E.J."/>
            <person name="Grandi G."/>
            <person name="Guiseppi G."/>
            <person name="Guy B.J."/>
            <person name="Haga K."/>
            <person name="Haiech J."/>
            <person name="Harwood C.R."/>
            <person name="Henaut A."/>
            <person name="Hilbert H."/>
            <person name="Holsappel S."/>
            <person name="Hosono S."/>
            <person name="Hullo M.-F."/>
            <person name="Itaya M."/>
            <person name="Jones L.-M."/>
            <person name="Joris B."/>
            <person name="Karamata D."/>
            <person name="Kasahara Y."/>
            <person name="Klaerr-Blanchard M."/>
            <person name="Klein C."/>
            <person name="Kobayashi Y."/>
            <person name="Koetter P."/>
            <person name="Koningstein G."/>
            <person name="Krogh S."/>
            <person name="Kumano M."/>
            <person name="Kurita K."/>
            <person name="Lapidus A."/>
            <person name="Lardinois S."/>
            <person name="Lauber J."/>
            <person name="Lazarevic V."/>
            <person name="Lee S.-M."/>
            <person name="Levine A."/>
            <person name="Liu H."/>
            <person name="Masuda S."/>
            <person name="Mauel C."/>
            <person name="Medigue C."/>
            <person name="Medina N."/>
            <person name="Mellado R.P."/>
            <person name="Mizuno M."/>
            <person name="Moestl D."/>
            <person name="Nakai S."/>
            <person name="Noback M."/>
            <person name="Noone D."/>
            <person name="O'Reilly M."/>
            <person name="Ogawa K."/>
            <person name="Ogiwara A."/>
            <person name="Oudega B."/>
            <person name="Park S.-H."/>
            <person name="Parro V."/>
            <person name="Pohl T.M."/>
            <person name="Portetelle D."/>
            <person name="Porwollik S."/>
            <person name="Prescott A.M."/>
            <person name="Presecan E."/>
            <person name="Pujic P."/>
            <person name="Purnelle B."/>
            <person name="Rapoport G."/>
            <person name="Rey M."/>
            <person name="Reynolds S."/>
            <person name="Rieger M."/>
            <person name="Rivolta C."/>
            <person name="Rocha E."/>
            <person name="Roche B."/>
            <person name="Rose M."/>
            <person name="Sadaie Y."/>
            <person name="Sato T."/>
            <person name="Scanlan E."/>
            <person name="Schleich S."/>
            <person name="Schroeter R."/>
            <person name="Scoffone F."/>
            <person name="Sekiguchi J."/>
            <person name="Sekowska A."/>
            <person name="Seror S.J."/>
            <person name="Serror P."/>
            <person name="Shin B.-S."/>
            <person name="Soldo B."/>
            <person name="Sorokin A."/>
            <person name="Tacconi E."/>
            <person name="Takagi T."/>
            <person name="Takahashi H."/>
            <person name="Takemaru K."/>
            <person name="Takeuchi M."/>
            <person name="Tamakoshi A."/>
            <person name="Tanaka T."/>
            <person name="Terpstra P."/>
            <person name="Tognoni A."/>
            <person name="Tosato V."/>
            <person name="Uchiyama S."/>
            <person name="Vandenbol M."/>
            <person name="Vannier F."/>
            <person name="Vassarotti A."/>
            <person name="Viari A."/>
            <person name="Wambutt R."/>
            <person name="Wedler E."/>
            <person name="Wedler H."/>
            <person name="Weitzenegger T."/>
            <person name="Winters P."/>
            <person name="Wipat A."/>
            <person name="Yamamoto H."/>
            <person name="Yamane K."/>
            <person name="Yasumoto K."/>
            <person name="Yata K."/>
            <person name="Yoshida K."/>
            <person name="Yoshikawa H.-F."/>
            <person name="Zumstein E."/>
            <person name="Yoshikawa H."/>
            <person name="Danchin A."/>
        </authorList>
    </citation>
    <scope>NUCLEOTIDE SEQUENCE [LARGE SCALE GENOMIC DNA]</scope>
    <source>
        <strain>168</strain>
    </source>
</reference>
<reference evidence="7 8" key="3">
    <citation type="journal article" date="2024" name="Nucleic Acids Res.">
        <title>A role for the S4-domain containing protein YlmH in ribosome-associated quality control in Bacillus subtilis.</title>
        <authorList>
            <person name="Takada H."/>
            <person name="Paternoga H."/>
            <person name="Fujiwara K."/>
            <person name="Nakamoto J.A."/>
            <person name="Park E.N."/>
            <person name="Dimitrova-Paternoga L."/>
            <person name="Beckert B."/>
            <person name="Saarma M."/>
            <person name="Tenson T."/>
            <person name="Buskirk A.R."/>
            <person name="Atkinson G.C."/>
            <person name="Chiba S."/>
            <person name="Wilson D.N."/>
            <person name="Hauryliuk V."/>
        </authorList>
    </citation>
    <scope>STRUCTURE BY ELECTRON MICROSCOPY (1.96 ANGSTROMS) IN COMPLEX WITH 50S RIBOSOMAL SUBUNIT</scope>
    <scope>IDENTIFICATION BY MASS SPECTROMETRY</scope>
    <scope>FUNCTION</scope>
    <scope>SUBUNIT</scope>
    <scope>SUBCELLULAR LOCATION</scope>
    <scope>DOMAIN</scope>
    <scope>DISRUPTION PHENOTYPE</scope>
    <scope>RRNA-BINDING</scope>
    <scope>TRNA-BINDING</scope>
    <scope>MUTAGENESIS OF ARG-182; ARG-195 AND LYS-197</scope>
    <source>
        <strain>168</strain>
    </source>
</reference>
<sequence length="257" mass="29066">MSDIYQHFRKDERAFIDQALEWKRIVQEQYRMKLTDFLDPREQVILSAVTGQADVGLAFSGGYDRAERKRAILFPEYITPEESDFELQAFNVRYADKFVSVDHRSLLGALMGIGLKRQKFGDIVFSETAVQLIVSADTADFVAAQLTQAGKAAVSLEKIDLSDLNIPAVDVEIRDDTVSSLRLDAVCASMSRQSRQKSQTLVKNGLVKVNWKVVEDPSYIVAEGDMLSIRGFGRCSLTKIEGKTKKDKWRVTFERQK</sequence>
<accession>P71020</accession>
<accession>Q796I8</accession>
<organism>
    <name type="scientific">Bacillus subtilis (strain 168)</name>
    <dbReference type="NCBI Taxonomy" id="224308"/>
    <lineage>
        <taxon>Bacteria</taxon>
        <taxon>Bacillati</taxon>
        <taxon>Bacillota</taxon>
        <taxon>Bacilli</taxon>
        <taxon>Bacillales</taxon>
        <taxon>Bacillaceae</taxon>
        <taxon>Bacillus</taxon>
    </lineage>
</organism>
<comment type="function">
    <text evidence="2">Part of the ribosome quality control system (RQC), a ribosome-associated complex that mediates the extraction of incompletely synthesized nascent chains from stalled ribosomes and their subsequent degradation (PubMed:38811035). RqcH recruits Ala-charged tRNA, and with RqcP directs the elongation of stalled nascent chains on 50S ribosomal subunits, leading to non-templated C-terminal alanine extensions (Ala tail) (PubMed:38811035). The Ala tail promotes nascent chain degradation (PubMed:38811035). RqcP2 (YlmH) overexpression can compensate for RqcP's role in Ala tailing during RQC, restoring Ala tail addition to peptides in stalled ribosomes (PubMed:38811035). Overexpression complements a double ssrA-rqcP double deletion, but not an ssrA-rqcH double deletion (PubMed:38811035).</text>
</comment>
<comment type="function">
    <text evidence="6">The majority of tagged protein is associated with tRNA-less 50S subunits, suggesting it might also play a role in late stage 50S subunit biogenesis.</text>
</comment>
<comment type="subunit">
    <text evidence="2">In the presence of chloramphenicol (a translation elongation inhibitor), but not erythromycin or lincomycin, associates with 50S ribosomal subunits with or without a tRNA in the P-site. The S4 domain binds in a similar position to RqcP.</text>
</comment>
<comment type="subcellular location">
    <subcellularLocation>
        <location evidence="6">Cytoplasm</location>
    </subcellularLocation>
</comment>
<comment type="domain">
    <text evidence="2">Has 3 domains, an N-terminal domain (NTD) which contacts helix 69 (H69) of the 23S rRNA, the central region which contains an RNA recognition motif (RRM) and the C-terminal S4 domain which interacts with the P-site tRNA and H69 (PubMed:38811035). The NTD and central region are required to complement a double ssrA-ylmH deletion and to bind 50S ribosomal subunits (PubMed:38811035). The ribosome binding site of the S4 domain overlaps that of RqcP (PubMed:38811035).</text>
</comment>
<comment type="disruption phenotype">
    <text evidence="2 3">No alteration in cell division (PubMed:9045828, PubMed:38811035). Has a synthetic lethal phenotype when disrupted simultaneously with trans- translation; double ssrA-ylmH deletions grow poorly at 37 and die at 49 degrees Celsius (PubMed:38811035).</text>
</comment>
<feature type="chain" id="PRO_0000360582" description="Ribosome-associated protein quality control protein P2">
    <location>
        <begin position="1"/>
        <end position="257"/>
    </location>
</feature>
<feature type="domain" description="S4 RNA-binding" evidence="1 2">
    <location>
        <begin position="181"/>
        <end position="251"/>
    </location>
</feature>
<feature type="region of interest" description="N-terminal domain" evidence="2">
    <location>
        <begin position="1"/>
        <end position="74"/>
    </location>
</feature>
<feature type="region of interest" description="Central region" evidence="2">
    <location>
        <begin position="87"/>
        <end position="166"/>
    </location>
</feature>
<feature type="mutagenesis site" description="Synthetic growth defect with ssrA deletion, no longer associates with 50S ribosomal subunits, does not complement rqcP deletion upon overexpression, does not increase Ala tailing." evidence="2">
    <original>R</original>
    <variation>A</variation>
    <location>
        <position position="182"/>
    </location>
</feature>
<feature type="mutagenesis site" description="Synthetic growth defect with ssrA deletion." evidence="2">
    <original>R</original>
    <variation>A</variation>
    <location>
        <position position="195"/>
    </location>
</feature>
<feature type="mutagenesis site" description="Wild-type protein function." evidence="2">
    <original>K</original>
    <variation>A</variation>
    <location>
        <position position="197"/>
    </location>
</feature>
<feature type="helix" evidence="9">
    <location>
        <begin position="5"/>
        <end position="7"/>
    </location>
</feature>
<feature type="helix" evidence="9">
    <location>
        <begin position="13"/>
        <end position="29"/>
    </location>
</feature>
<feature type="helix" evidence="9">
    <location>
        <begin position="40"/>
        <end position="50"/>
    </location>
</feature>
<feature type="strand" evidence="9">
    <location>
        <begin position="56"/>
        <end position="60"/>
    </location>
</feature>
<feature type="strand" evidence="9">
    <location>
        <begin position="62"/>
        <end position="65"/>
    </location>
</feature>
<feature type="strand" evidence="9">
    <location>
        <begin position="67"/>
        <end position="74"/>
    </location>
</feature>
<feature type="helix" evidence="9">
    <location>
        <begin position="83"/>
        <end position="85"/>
    </location>
</feature>
<feature type="strand" evidence="9">
    <location>
        <begin position="87"/>
        <end position="93"/>
    </location>
</feature>
<feature type="turn" evidence="9">
    <location>
        <begin position="96"/>
        <end position="98"/>
    </location>
</feature>
<feature type="helix" evidence="9">
    <location>
        <begin position="103"/>
        <end position="112"/>
    </location>
</feature>
<feature type="helix" evidence="9">
    <location>
        <begin position="117"/>
        <end position="119"/>
    </location>
</feature>
<feature type="strand" evidence="9">
    <location>
        <begin position="120"/>
        <end position="125"/>
    </location>
</feature>
<feature type="strand" evidence="9">
    <location>
        <begin position="130"/>
        <end position="135"/>
    </location>
</feature>
<feature type="helix" evidence="9">
    <location>
        <begin position="136"/>
        <end position="138"/>
    </location>
</feature>
<feature type="helix" evidence="9">
    <location>
        <begin position="139"/>
        <end position="145"/>
    </location>
</feature>
<feature type="strand" evidence="9">
    <location>
        <begin position="155"/>
        <end position="159"/>
    </location>
</feature>
<feature type="helix" evidence="9">
    <location>
        <begin position="161"/>
        <end position="163"/>
    </location>
</feature>
<feature type="strand" evidence="9">
    <location>
        <begin position="173"/>
        <end position="179"/>
    </location>
</feature>
<feature type="helix" evidence="9">
    <location>
        <begin position="183"/>
        <end position="191"/>
    </location>
</feature>
<feature type="helix" evidence="9">
    <location>
        <begin position="195"/>
        <end position="204"/>
    </location>
</feature>
<feature type="strand" evidence="9">
    <location>
        <begin position="223"/>
        <end position="227"/>
    </location>
</feature>
<feature type="turn" evidence="9">
    <location>
        <begin position="230"/>
        <end position="232"/>
    </location>
</feature>
<feature type="strand" evidence="9">
    <location>
        <begin position="235"/>
        <end position="244"/>
    </location>
</feature>
<feature type="strand" evidence="9">
    <location>
        <begin position="247"/>
        <end position="255"/>
    </location>
</feature>
<gene>
    <name evidence="4" type="primary">rqcP2</name>
    <name type="synonym">ylmH</name>
    <name type="ordered locus">BSU15410</name>
</gene>
<proteinExistence type="evidence at protein level"/>
<protein>
    <recommendedName>
        <fullName evidence="5">Ribosome-associated protein quality control protein P2</fullName>
        <shortName evidence="5">RqcP2</shortName>
    </recommendedName>
</protein>
<dbReference type="EMBL" id="U60901">
    <property type="protein sequence ID" value="AAB49278.1"/>
    <property type="molecule type" value="Genomic_DNA"/>
</dbReference>
<dbReference type="EMBL" id="AL009126">
    <property type="protein sequence ID" value="CAB13415.1"/>
    <property type="molecule type" value="Genomic_DNA"/>
</dbReference>
<dbReference type="PIR" id="H69876">
    <property type="entry name" value="H69876"/>
</dbReference>
<dbReference type="RefSeq" id="NP_389424.1">
    <property type="nucleotide sequence ID" value="NC_000964.3"/>
</dbReference>
<dbReference type="RefSeq" id="WP_003232140.1">
    <property type="nucleotide sequence ID" value="NZ_OZ025638.1"/>
</dbReference>
<dbReference type="PDB" id="8S1P">
    <property type="method" value="EM"/>
    <property type="resolution" value="1.96 A"/>
    <property type="chains" value="V=1-257"/>
</dbReference>
<dbReference type="PDB" id="8S1U">
    <property type="method" value="EM"/>
    <property type="resolution" value="3.40 A"/>
    <property type="chains" value="V=1-257"/>
</dbReference>
<dbReference type="PDBsum" id="8S1P"/>
<dbReference type="PDBsum" id="8S1U"/>
<dbReference type="EMDB" id="EMD-19638"/>
<dbReference type="EMDB" id="EMD-19641"/>
<dbReference type="SMR" id="P71020"/>
<dbReference type="FunCoup" id="P71020">
    <property type="interactions" value="152"/>
</dbReference>
<dbReference type="STRING" id="224308.BSU15410"/>
<dbReference type="PaxDb" id="224308-BSU15410"/>
<dbReference type="EnsemblBacteria" id="CAB13415">
    <property type="protein sequence ID" value="CAB13415"/>
    <property type="gene ID" value="BSU_15410"/>
</dbReference>
<dbReference type="GeneID" id="940118"/>
<dbReference type="KEGG" id="bsu:BSU15410"/>
<dbReference type="PATRIC" id="fig|224308.179.peg.1679"/>
<dbReference type="eggNOG" id="COG2302">
    <property type="taxonomic scope" value="Bacteria"/>
</dbReference>
<dbReference type="InParanoid" id="P71020"/>
<dbReference type="OrthoDB" id="9812787at2"/>
<dbReference type="PhylomeDB" id="P71020"/>
<dbReference type="BioCyc" id="BSUB:BSU15410-MONOMER"/>
<dbReference type="Proteomes" id="UP000001570">
    <property type="component" value="Chromosome"/>
</dbReference>
<dbReference type="GO" id="GO:0005737">
    <property type="term" value="C:cytoplasm"/>
    <property type="evidence" value="ECO:0007669"/>
    <property type="project" value="UniProtKB-SubCell"/>
</dbReference>
<dbReference type="GO" id="GO:1990112">
    <property type="term" value="C:RQC complex"/>
    <property type="evidence" value="ECO:0000315"/>
    <property type="project" value="UniProtKB"/>
</dbReference>
<dbReference type="GO" id="GO:0015935">
    <property type="term" value="C:small ribosomal subunit"/>
    <property type="evidence" value="ECO:0000318"/>
    <property type="project" value="GO_Central"/>
</dbReference>
<dbReference type="GO" id="GO:0043023">
    <property type="term" value="F:ribosomal large subunit binding"/>
    <property type="evidence" value="ECO:0000314"/>
    <property type="project" value="UniProtKB"/>
</dbReference>
<dbReference type="GO" id="GO:0019843">
    <property type="term" value="F:rRNA binding"/>
    <property type="evidence" value="ECO:0000314"/>
    <property type="project" value="UniProtKB"/>
</dbReference>
<dbReference type="GO" id="GO:0003735">
    <property type="term" value="F:structural constituent of ribosome"/>
    <property type="evidence" value="ECO:0000318"/>
    <property type="project" value="GO_Central"/>
</dbReference>
<dbReference type="GO" id="GO:0000049">
    <property type="term" value="F:tRNA binding"/>
    <property type="evidence" value="ECO:0000314"/>
    <property type="project" value="UniProtKB"/>
</dbReference>
<dbReference type="GO" id="GO:0072344">
    <property type="term" value="P:rescue of stalled ribosome"/>
    <property type="evidence" value="ECO:0000315"/>
    <property type="project" value="UniProtKB"/>
</dbReference>
<dbReference type="GO" id="GO:0042274">
    <property type="term" value="P:ribosomal small subunit biogenesis"/>
    <property type="evidence" value="ECO:0000318"/>
    <property type="project" value="GO_Central"/>
</dbReference>
<dbReference type="CDD" id="cd00165">
    <property type="entry name" value="S4"/>
    <property type="match status" value="1"/>
</dbReference>
<dbReference type="Gene3D" id="3.30.1370.160">
    <property type="match status" value="1"/>
</dbReference>
<dbReference type="Gene3D" id="3.30.70.330">
    <property type="match status" value="1"/>
</dbReference>
<dbReference type="Gene3D" id="3.10.290.10">
    <property type="entry name" value="RNA-binding S4 domain"/>
    <property type="match status" value="1"/>
</dbReference>
<dbReference type="InterPro" id="IPR012677">
    <property type="entry name" value="Nucleotide-bd_a/b_plait_sf"/>
</dbReference>
<dbReference type="InterPro" id="IPR048443">
    <property type="entry name" value="RqcP2_N"/>
</dbReference>
<dbReference type="InterPro" id="IPR040591">
    <property type="entry name" value="RqcP2_RBD"/>
</dbReference>
<dbReference type="InterPro" id="IPR002942">
    <property type="entry name" value="S4_RNA-bd"/>
</dbReference>
<dbReference type="InterPro" id="IPR036986">
    <property type="entry name" value="S4_RNA-bd_sf"/>
</dbReference>
<dbReference type="PANTHER" id="PTHR13633">
    <property type="entry name" value="MITOCHONDRIAL TRANSCRIPTION RESCUE FACTOR 1"/>
    <property type="match status" value="1"/>
</dbReference>
<dbReference type="PANTHER" id="PTHR13633:SF3">
    <property type="entry name" value="MITOCHONDRIAL TRANSCRIPTION RESCUE FACTOR 1"/>
    <property type="match status" value="1"/>
</dbReference>
<dbReference type="Pfam" id="PF01479">
    <property type="entry name" value="S4"/>
    <property type="match status" value="1"/>
</dbReference>
<dbReference type="Pfam" id="PF21278">
    <property type="entry name" value="YlmH_1st"/>
    <property type="match status" value="1"/>
</dbReference>
<dbReference type="Pfam" id="PF17774">
    <property type="entry name" value="YlmH_RBD"/>
    <property type="match status" value="1"/>
</dbReference>
<dbReference type="SMART" id="SM00363">
    <property type="entry name" value="S4"/>
    <property type="match status" value="1"/>
</dbReference>
<dbReference type="SUPFAM" id="SSF55174">
    <property type="entry name" value="Alpha-L RNA-binding motif"/>
    <property type="match status" value="1"/>
</dbReference>
<dbReference type="PROSITE" id="PS50889">
    <property type="entry name" value="S4"/>
    <property type="match status" value="1"/>
</dbReference>